<sequence length="441" mass="50280">MAPRAQIQGPLTFGDVAVAFTRIEWRHLDAAQRALYRDVMLENYGNLVSVGLLSSKPKLITQLEQGAEPWTEVREAPSGTHAVEDYWFETKMSALKQSTSEASVLGERTKSVMMEKGLDWEGRSSTEKNYKCKECGKVFKYNSSFISHQRNHTSEKPHKCKECGIAFMNSSSLLNHHKVHAGKQPYRCIECGKFLKKHSTFINHQRIHSREKPHKCIECGKTFRKNSILLSHQRIHTGQKPYKCNDCGKAFAQNAALTRHERIHSGEKPFKCNKCGRAFRDNSTVLEHQKIHTGEKPYQCNECGKAFRKSSTLISHQRMHTGEKPYHCSKCGKSFRYSSSFAGHQKTHSGNKPYQCRDCGKAFTKSSTLTGHQRIHTGEKPYHCKKCGKAFRHSSGLVEHQRLHTGEKPYKCNECGKAFPRSSALKQHKKIHNKERAMKCS</sequence>
<proteinExistence type="evidence at protein level"/>
<evidence type="ECO:0000255" key="1">
    <source>
        <dbReference type="PROSITE-ProRule" id="PRU00042"/>
    </source>
</evidence>
<evidence type="ECO:0000255" key="2">
    <source>
        <dbReference type="PROSITE-ProRule" id="PRU00119"/>
    </source>
</evidence>
<evidence type="ECO:0000303" key="3">
    <source>
    </source>
</evidence>
<evidence type="ECO:0000305" key="4"/>
<protein>
    <recommendedName>
        <fullName>Zinc finger protein 485</fullName>
    </recommendedName>
</protein>
<keyword id="KW-0025">Alternative splicing</keyword>
<keyword id="KW-0238">DNA-binding</keyword>
<keyword id="KW-0479">Metal-binding</keyword>
<keyword id="KW-0539">Nucleus</keyword>
<keyword id="KW-1267">Proteomics identification</keyword>
<keyword id="KW-1185">Reference proteome</keyword>
<keyword id="KW-0677">Repeat</keyword>
<keyword id="KW-0804">Transcription</keyword>
<keyword id="KW-0805">Transcription regulation</keyword>
<keyword id="KW-0862">Zinc</keyword>
<keyword id="KW-0863">Zinc-finger</keyword>
<gene>
    <name type="primary">ZNF485</name>
</gene>
<organism>
    <name type="scientific">Homo sapiens</name>
    <name type="common">Human</name>
    <dbReference type="NCBI Taxonomy" id="9606"/>
    <lineage>
        <taxon>Eukaryota</taxon>
        <taxon>Metazoa</taxon>
        <taxon>Chordata</taxon>
        <taxon>Craniata</taxon>
        <taxon>Vertebrata</taxon>
        <taxon>Euteleostomi</taxon>
        <taxon>Mammalia</taxon>
        <taxon>Eutheria</taxon>
        <taxon>Euarchontoglires</taxon>
        <taxon>Primates</taxon>
        <taxon>Haplorrhini</taxon>
        <taxon>Catarrhini</taxon>
        <taxon>Hominidae</taxon>
        <taxon>Homo</taxon>
    </lineage>
</organism>
<reference key="1">
    <citation type="journal article" date="2004" name="Nat. Genet.">
        <title>Complete sequencing and characterization of 21,243 full-length human cDNAs.</title>
        <authorList>
            <person name="Ota T."/>
            <person name="Suzuki Y."/>
            <person name="Nishikawa T."/>
            <person name="Otsuki T."/>
            <person name="Sugiyama T."/>
            <person name="Irie R."/>
            <person name="Wakamatsu A."/>
            <person name="Hayashi K."/>
            <person name="Sato H."/>
            <person name="Nagai K."/>
            <person name="Kimura K."/>
            <person name="Makita H."/>
            <person name="Sekine M."/>
            <person name="Obayashi M."/>
            <person name="Nishi T."/>
            <person name="Shibahara T."/>
            <person name="Tanaka T."/>
            <person name="Ishii S."/>
            <person name="Yamamoto J."/>
            <person name="Saito K."/>
            <person name="Kawai Y."/>
            <person name="Isono Y."/>
            <person name="Nakamura Y."/>
            <person name="Nagahari K."/>
            <person name="Murakami K."/>
            <person name="Yasuda T."/>
            <person name="Iwayanagi T."/>
            <person name="Wagatsuma M."/>
            <person name="Shiratori A."/>
            <person name="Sudo H."/>
            <person name="Hosoiri T."/>
            <person name="Kaku Y."/>
            <person name="Kodaira H."/>
            <person name="Kondo H."/>
            <person name="Sugawara M."/>
            <person name="Takahashi M."/>
            <person name="Kanda K."/>
            <person name="Yokoi T."/>
            <person name="Furuya T."/>
            <person name="Kikkawa E."/>
            <person name="Omura Y."/>
            <person name="Abe K."/>
            <person name="Kamihara K."/>
            <person name="Katsuta N."/>
            <person name="Sato K."/>
            <person name="Tanikawa M."/>
            <person name="Yamazaki M."/>
            <person name="Ninomiya K."/>
            <person name="Ishibashi T."/>
            <person name="Yamashita H."/>
            <person name="Murakawa K."/>
            <person name="Fujimori K."/>
            <person name="Tanai H."/>
            <person name="Kimata M."/>
            <person name="Watanabe M."/>
            <person name="Hiraoka S."/>
            <person name="Chiba Y."/>
            <person name="Ishida S."/>
            <person name="Ono Y."/>
            <person name="Takiguchi S."/>
            <person name="Watanabe S."/>
            <person name="Yosida M."/>
            <person name="Hotuta T."/>
            <person name="Kusano J."/>
            <person name="Kanehori K."/>
            <person name="Takahashi-Fujii A."/>
            <person name="Hara H."/>
            <person name="Tanase T.-O."/>
            <person name="Nomura Y."/>
            <person name="Togiya S."/>
            <person name="Komai F."/>
            <person name="Hara R."/>
            <person name="Takeuchi K."/>
            <person name="Arita M."/>
            <person name="Imose N."/>
            <person name="Musashino K."/>
            <person name="Yuuki H."/>
            <person name="Oshima A."/>
            <person name="Sasaki N."/>
            <person name="Aotsuka S."/>
            <person name="Yoshikawa Y."/>
            <person name="Matsunawa H."/>
            <person name="Ichihara T."/>
            <person name="Shiohata N."/>
            <person name="Sano S."/>
            <person name="Moriya S."/>
            <person name="Momiyama H."/>
            <person name="Satoh N."/>
            <person name="Takami S."/>
            <person name="Terashima Y."/>
            <person name="Suzuki O."/>
            <person name="Nakagawa S."/>
            <person name="Senoh A."/>
            <person name="Mizoguchi H."/>
            <person name="Goto Y."/>
            <person name="Shimizu F."/>
            <person name="Wakebe H."/>
            <person name="Hishigaki H."/>
            <person name="Watanabe T."/>
            <person name="Sugiyama A."/>
            <person name="Takemoto M."/>
            <person name="Kawakami B."/>
            <person name="Yamazaki M."/>
            <person name="Watanabe K."/>
            <person name="Kumagai A."/>
            <person name="Itakura S."/>
            <person name="Fukuzumi Y."/>
            <person name="Fujimori Y."/>
            <person name="Komiyama M."/>
            <person name="Tashiro H."/>
            <person name="Tanigami A."/>
            <person name="Fujiwara T."/>
            <person name="Ono T."/>
            <person name="Yamada K."/>
            <person name="Fujii Y."/>
            <person name="Ozaki K."/>
            <person name="Hirao M."/>
            <person name="Ohmori Y."/>
            <person name="Kawabata A."/>
            <person name="Hikiji T."/>
            <person name="Kobatake N."/>
            <person name="Inagaki H."/>
            <person name="Ikema Y."/>
            <person name="Okamoto S."/>
            <person name="Okitani R."/>
            <person name="Kawakami T."/>
            <person name="Noguchi S."/>
            <person name="Itoh T."/>
            <person name="Shigeta K."/>
            <person name="Senba T."/>
            <person name="Matsumura K."/>
            <person name="Nakajima Y."/>
            <person name="Mizuno T."/>
            <person name="Morinaga M."/>
            <person name="Sasaki M."/>
            <person name="Togashi T."/>
            <person name="Oyama M."/>
            <person name="Hata H."/>
            <person name="Watanabe M."/>
            <person name="Komatsu T."/>
            <person name="Mizushima-Sugano J."/>
            <person name="Satoh T."/>
            <person name="Shirai Y."/>
            <person name="Takahashi Y."/>
            <person name="Nakagawa K."/>
            <person name="Okumura K."/>
            <person name="Nagase T."/>
            <person name="Nomura N."/>
            <person name="Kikuchi H."/>
            <person name="Masuho Y."/>
            <person name="Yamashita R."/>
            <person name="Nakai K."/>
            <person name="Yada T."/>
            <person name="Nakamura Y."/>
            <person name="Ohara O."/>
            <person name="Isogai T."/>
            <person name="Sugano S."/>
        </authorList>
    </citation>
    <scope>NUCLEOTIDE SEQUENCE [LARGE SCALE MRNA] (ISOFORMS 1 AND 2)</scope>
    <source>
        <tissue>Brain</tissue>
        <tissue>Mammary gland</tissue>
    </source>
</reference>
<reference key="2">
    <citation type="journal article" date="2004" name="Nature">
        <title>The DNA sequence and comparative analysis of human chromosome 10.</title>
        <authorList>
            <person name="Deloukas P."/>
            <person name="Earthrowl M.E."/>
            <person name="Grafham D.V."/>
            <person name="Rubenfield M."/>
            <person name="French L."/>
            <person name="Steward C.A."/>
            <person name="Sims S.K."/>
            <person name="Jones M.C."/>
            <person name="Searle S."/>
            <person name="Scott C."/>
            <person name="Howe K."/>
            <person name="Hunt S.E."/>
            <person name="Andrews T.D."/>
            <person name="Gilbert J.G.R."/>
            <person name="Swarbreck D."/>
            <person name="Ashurst J.L."/>
            <person name="Taylor A."/>
            <person name="Battles J."/>
            <person name="Bird C.P."/>
            <person name="Ainscough R."/>
            <person name="Almeida J.P."/>
            <person name="Ashwell R.I.S."/>
            <person name="Ambrose K.D."/>
            <person name="Babbage A.K."/>
            <person name="Bagguley C.L."/>
            <person name="Bailey J."/>
            <person name="Banerjee R."/>
            <person name="Bates K."/>
            <person name="Beasley H."/>
            <person name="Bray-Allen S."/>
            <person name="Brown A.J."/>
            <person name="Brown J.Y."/>
            <person name="Burford D.C."/>
            <person name="Burrill W."/>
            <person name="Burton J."/>
            <person name="Cahill P."/>
            <person name="Camire D."/>
            <person name="Carter N.P."/>
            <person name="Chapman J.C."/>
            <person name="Clark S.Y."/>
            <person name="Clarke G."/>
            <person name="Clee C.M."/>
            <person name="Clegg S."/>
            <person name="Corby N."/>
            <person name="Coulson A."/>
            <person name="Dhami P."/>
            <person name="Dutta I."/>
            <person name="Dunn M."/>
            <person name="Faulkner L."/>
            <person name="Frankish A."/>
            <person name="Frankland J.A."/>
            <person name="Garner P."/>
            <person name="Garnett J."/>
            <person name="Gribble S."/>
            <person name="Griffiths C."/>
            <person name="Grocock R."/>
            <person name="Gustafson E."/>
            <person name="Hammond S."/>
            <person name="Harley J.L."/>
            <person name="Hart E."/>
            <person name="Heath P.D."/>
            <person name="Ho T.P."/>
            <person name="Hopkins B."/>
            <person name="Horne J."/>
            <person name="Howden P.J."/>
            <person name="Huckle E."/>
            <person name="Hynds C."/>
            <person name="Johnson C."/>
            <person name="Johnson D."/>
            <person name="Kana A."/>
            <person name="Kay M."/>
            <person name="Kimberley A.M."/>
            <person name="Kershaw J.K."/>
            <person name="Kokkinaki M."/>
            <person name="Laird G.K."/>
            <person name="Lawlor S."/>
            <person name="Lee H.M."/>
            <person name="Leongamornlert D.A."/>
            <person name="Laird G."/>
            <person name="Lloyd C."/>
            <person name="Lloyd D.M."/>
            <person name="Loveland J."/>
            <person name="Lovell J."/>
            <person name="McLaren S."/>
            <person name="McLay K.E."/>
            <person name="McMurray A."/>
            <person name="Mashreghi-Mohammadi M."/>
            <person name="Matthews L."/>
            <person name="Milne S."/>
            <person name="Nickerson T."/>
            <person name="Nguyen M."/>
            <person name="Overton-Larty E."/>
            <person name="Palmer S.A."/>
            <person name="Pearce A.V."/>
            <person name="Peck A.I."/>
            <person name="Pelan S."/>
            <person name="Phillimore B."/>
            <person name="Porter K."/>
            <person name="Rice C.M."/>
            <person name="Rogosin A."/>
            <person name="Ross M.T."/>
            <person name="Sarafidou T."/>
            <person name="Sehra H.K."/>
            <person name="Shownkeen R."/>
            <person name="Skuce C.D."/>
            <person name="Smith M."/>
            <person name="Standring L."/>
            <person name="Sycamore N."/>
            <person name="Tester J."/>
            <person name="Thorpe A."/>
            <person name="Torcasso W."/>
            <person name="Tracey A."/>
            <person name="Tromans A."/>
            <person name="Tsolas J."/>
            <person name="Wall M."/>
            <person name="Walsh J."/>
            <person name="Wang H."/>
            <person name="Weinstock K."/>
            <person name="West A.P."/>
            <person name="Willey D.L."/>
            <person name="Whitehead S.L."/>
            <person name="Wilming L."/>
            <person name="Wray P.W."/>
            <person name="Young L."/>
            <person name="Chen Y."/>
            <person name="Lovering R.C."/>
            <person name="Moschonas N.K."/>
            <person name="Siebert R."/>
            <person name="Fechtel K."/>
            <person name="Bentley D."/>
            <person name="Durbin R.M."/>
            <person name="Hubbard T."/>
            <person name="Doucette-Stamm L."/>
            <person name="Beck S."/>
            <person name="Smith D.R."/>
            <person name="Rogers J."/>
        </authorList>
    </citation>
    <scope>NUCLEOTIDE SEQUENCE [LARGE SCALE GENOMIC DNA]</scope>
</reference>
<reference key="3">
    <citation type="journal article" date="2004" name="Genome Res.">
        <title>The status, quality, and expansion of the NIH full-length cDNA project: the Mammalian Gene Collection (MGC).</title>
        <authorList>
            <consortium name="The MGC Project Team"/>
        </authorList>
    </citation>
    <scope>NUCLEOTIDE SEQUENCE [LARGE SCALE MRNA] (ISOFORM 1)</scope>
    <source>
        <tissue>Skin</tissue>
    </source>
</reference>
<dbReference type="EMBL" id="AK074679">
    <property type="protein sequence ID" value="BAC11133.1"/>
    <property type="molecule type" value="mRNA"/>
</dbReference>
<dbReference type="EMBL" id="AK299707">
    <property type="protein sequence ID" value="BAG61608.1"/>
    <property type="molecule type" value="mRNA"/>
</dbReference>
<dbReference type="EMBL" id="AL645634">
    <property type="status" value="NOT_ANNOTATED_CDS"/>
    <property type="molecule type" value="Genomic_DNA"/>
</dbReference>
<dbReference type="EMBL" id="BC014161">
    <property type="protein sequence ID" value="AAH14161.1"/>
    <property type="status" value="ALT_FRAME"/>
    <property type="molecule type" value="mRNA"/>
</dbReference>
<dbReference type="CCDS" id="CCDS7205.2">
    <molecule id="Q8NCK3-1"/>
</dbReference>
<dbReference type="RefSeq" id="NP_001305069.1">
    <molecule id="Q8NCK3-1"/>
    <property type="nucleotide sequence ID" value="NM_001318140.2"/>
</dbReference>
<dbReference type="RefSeq" id="NP_001305070.1">
    <molecule id="Q8NCK3-1"/>
    <property type="nucleotide sequence ID" value="NM_001318141.2"/>
</dbReference>
<dbReference type="RefSeq" id="NP_001305071.1">
    <molecule id="Q8NCK3-2"/>
    <property type="nucleotide sequence ID" value="NM_001318142.2"/>
</dbReference>
<dbReference type="RefSeq" id="NP_001305072.1">
    <molecule id="Q8NCK3-2"/>
    <property type="nucleotide sequence ID" value="NM_001318143.2"/>
</dbReference>
<dbReference type="RefSeq" id="NP_660355.2">
    <molecule id="Q8NCK3-1"/>
    <property type="nucleotide sequence ID" value="NM_145312.4"/>
</dbReference>
<dbReference type="RefSeq" id="XP_011537800.1">
    <molecule id="Q8NCK3-2"/>
    <property type="nucleotide sequence ID" value="XM_011539498.3"/>
</dbReference>
<dbReference type="SMR" id="Q8NCK3"/>
<dbReference type="BioGRID" id="128671">
    <property type="interactions" value="31"/>
</dbReference>
<dbReference type="FunCoup" id="Q8NCK3">
    <property type="interactions" value="357"/>
</dbReference>
<dbReference type="IntAct" id="Q8NCK3">
    <property type="interactions" value="26"/>
</dbReference>
<dbReference type="STRING" id="9606.ENSP00000363558"/>
<dbReference type="iPTMnet" id="Q8NCK3"/>
<dbReference type="PhosphoSitePlus" id="Q8NCK3"/>
<dbReference type="BioMuta" id="ZNF485"/>
<dbReference type="DMDM" id="74762554"/>
<dbReference type="jPOST" id="Q8NCK3"/>
<dbReference type="MassIVE" id="Q8NCK3"/>
<dbReference type="PaxDb" id="9606-ENSP00000354694"/>
<dbReference type="PeptideAtlas" id="Q8NCK3"/>
<dbReference type="ProteomicsDB" id="5017"/>
<dbReference type="ProteomicsDB" id="72901">
    <molecule id="Q8NCK3-1"/>
</dbReference>
<dbReference type="Pumba" id="Q8NCK3"/>
<dbReference type="Antibodypedia" id="26927">
    <property type="antibodies" value="68 antibodies from 16 providers"/>
</dbReference>
<dbReference type="DNASU" id="220992"/>
<dbReference type="Ensembl" id="ENST00000361807.8">
    <molecule id="Q8NCK3-1"/>
    <property type="protein sequence ID" value="ENSP00000354694.3"/>
    <property type="gene ID" value="ENSG00000198298.13"/>
</dbReference>
<dbReference type="Ensembl" id="ENST00000374435.3">
    <molecule id="Q8NCK3-1"/>
    <property type="protein sequence ID" value="ENSP00000363558.3"/>
    <property type="gene ID" value="ENSG00000198298.13"/>
</dbReference>
<dbReference type="GeneID" id="220992"/>
<dbReference type="KEGG" id="hsa:220992"/>
<dbReference type="MANE-Select" id="ENST00000361807.8">
    <property type="protein sequence ID" value="ENSP00000354694.3"/>
    <property type="RefSeq nucleotide sequence ID" value="NM_145312.4"/>
    <property type="RefSeq protein sequence ID" value="NP_660355.2"/>
</dbReference>
<dbReference type="UCSC" id="uc010qfc.3">
    <molecule id="Q8NCK3-1"/>
    <property type="organism name" value="human"/>
</dbReference>
<dbReference type="AGR" id="HGNC:23440"/>
<dbReference type="CTD" id="220992"/>
<dbReference type="DisGeNET" id="220992"/>
<dbReference type="GeneCards" id="ZNF485"/>
<dbReference type="HGNC" id="HGNC:23440">
    <property type="gene designation" value="ZNF485"/>
</dbReference>
<dbReference type="HPA" id="ENSG00000198298">
    <property type="expression patterns" value="Low tissue specificity"/>
</dbReference>
<dbReference type="neXtProt" id="NX_Q8NCK3"/>
<dbReference type="OpenTargets" id="ENSG00000198298"/>
<dbReference type="PharmGKB" id="PA134887005"/>
<dbReference type="VEuPathDB" id="HostDB:ENSG00000198298"/>
<dbReference type="eggNOG" id="KOG1721">
    <property type="taxonomic scope" value="Eukaryota"/>
</dbReference>
<dbReference type="GeneTree" id="ENSGT00940000163811"/>
<dbReference type="HOGENOM" id="CLU_002678_57_1_1"/>
<dbReference type="InParanoid" id="Q8NCK3"/>
<dbReference type="OMA" id="AFTQIEW"/>
<dbReference type="OrthoDB" id="9819469at2759"/>
<dbReference type="PAN-GO" id="Q8NCK3">
    <property type="GO annotations" value="4 GO annotations based on evolutionary models"/>
</dbReference>
<dbReference type="PhylomeDB" id="Q8NCK3"/>
<dbReference type="TreeFam" id="TF337055"/>
<dbReference type="PathwayCommons" id="Q8NCK3"/>
<dbReference type="Reactome" id="R-HSA-212436">
    <property type="pathway name" value="Generic Transcription Pathway"/>
</dbReference>
<dbReference type="SignaLink" id="Q8NCK3"/>
<dbReference type="BioGRID-ORCS" id="220992">
    <property type="hits" value="10 hits in 1145 CRISPR screens"/>
</dbReference>
<dbReference type="ChiTaRS" id="ZNF485">
    <property type="organism name" value="human"/>
</dbReference>
<dbReference type="GenomeRNAi" id="220992"/>
<dbReference type="Pharos" id="Q8NCK3">
    <property type="development level" value="Tdark"/>
</dbReference>
<dbReference type="PRO" id="PR:Q8NCK3"/>
<dbReference type="Proteomes" id="UP000005640">
    <property type="component" value="Chromosome 10"/>
</dbReference>
<dbReference type="RNAct" id="Q8NCK3">
    <property type="molecule type" value="protein"/>
</dbReference>
<dbReference type="Bgee" id="ENSG00000198298">
    <property type="expression patterns" value="Expressed in primordial germ cell in gonad and 117 other cell types or tissues"/>
</dbReference>
<dbReference type="ExpressionAtlas" id="Q8NCK3">
    <property type="expression patterns" value="baseline and differential"/>
</dbReference>
<dbReference type="GO" id="GO:0005634">
    <property type="term" value="C:nucleus"/>
    <property type="evidence" value="ECO:0000318"/>
    <property type="project" value="GO_Central"/>
</dbReference>
<dbReference type="GO" id="GO:0001228">
    <property type="term" value="F:DNA-binding transcription activator activity, RNA polymerase II-specific"/>
    <property type="evidence" value="ECO:0000318"/>
    <property type="project" value="GO_Central"/>
</dbReference>
<dbReference type="GO" id="GO:0000978">
    <property type="term" value="F:RNA polymerase II cis-regulatory region sequence-specific DNA binding"/>
    <property type="evidence" value="ECO:0000318"/>
    <property type="project" value="GO_Central"/>
</dbReference>
<dbReference type="GO" id="GO:0008270">
    <property type="term" value="F:zinc ion binding"/>
    <property type="evidence" value="ECO:0007669"/>
    <property type="project" value="UniProtKB-KW"/>
</dbReference>
<dbReference type="GO" id="GO:0006357">
    <property type="term" value="P:regulation of transcription by RNA polymerase II"/>
    <property type="evidence" value="ECO:0000318"/>
    <property type="project" value="GO_Central"/>
</dbReference>
<dbReference type="CDD" id="cd07765">
    <property type="entry name" value="KRAB_A-box"/>
    <property type="match status" value="1"/>
</dbReference>
<dbReference type="FunFam" id="3.30.160.60:FF:002093">
    <property type="match status" value="1"/>
</dbReference>
<dbReference type="FunFam" id="3.30.160.60:FF:004178">
    <property type="match status" value="1"/>
</dbReference>
<dbReference type="FunFam" id="3.30.160.60:FF:000144">
    <property type="entry name" value="zinc finger protein 181 isoform X1"/>
    <property type="match status" value="1"/>
</dbReference>
<dbReference type="FunFam" id="3.30.160.60:FF:000352">
    <property type="entry name" value="zinc finger protein 3 homolog"/>
    <property type="match status" value="1"/>
</dbReference>
<dbReference type="FunFam" id="3.30.160.60:FF:002343">
    <property type="entry name" value="Zinc finger protein 33A"/>
    <property type="match status" value="1"/>
</dbReference>
<dbReference type="FunFam" id="3.30.160.60:FF:000016">
    <property type="entry name" value="zinc finger protein 37 homolog"/>
    <property type="match status" value="1"/>
</dbReference>
<dbReference type="FunFam" id="3.30.160.60:FF:000238">
    <property type="entry name" value="Zinc finger protein 485"/>
    <property type="match status" value="2"/>
</dbReference>
<dbReference type="FunFam" id="3.30.160.60:FF:001286">
    <property type="entry name" value="Zinc finger protein 485"/>
    <property type="match status" value="1"/>
</dbReference>
<dbReference type="FunFam" id="3.30.160.60:FF:001631">
    <property type="entry name" value="Zinc finger protein 836"/>
    <property type="match status" value="1"/>
</dbReference>
<dbReference type="Gene3D" id="6.10.140.140">
    <property type="match status" value="1"/>
</dbReference>
<dbReference type="Gene3D" id="3.30.160.60">
    <property type="entry name" value="Classic Zinc Finger"/>
    <property type="match status" value="11"/>
</dbReference>
<dbReference type="InterPro" id="IPR001909">
    <property type="entry name" value="KRAB"/>
</dbReference>
<dbReference type="InterPro" id="IPR036051">
    <property type="entry name" value="KRAB_dom_sf"/>
</dbReference>
<dbReference type="InterPro" id="IPR050758">
    <property type="entry name" value="Znf_C2H2-type"/>
</dbReference>
<dbReference type="InterPro" id="IPR036236">
    <property type="entry name" value="Znf_C2H2_sf"/>
</dbReference>
<dbReference type="InterPro" id="IPR013087">
    <property type="entry name" value="Znf_C2H2_type"/>
</dbReference>
<dbReference type="PANTHER" id="PTHR23234:SF8">
    <property type="entry name" value="C2H2-TYPE DOMAIN-CONTAINING PROTEIN"/>
    <property type="match status" value="1"/>
</dbReference>
<dbReference type="PANTHER" id="PTHR23234">
    <property type="entry name" value="ZNF44 PROTEIN"/>
    <property type="match status" value="1"/>
</dbReference>
<dbReference type="Pfam" id="PF01352">
    <property type="entry name" value="KRAB"/>
    <property type="match status" value="1"/>
</dbReference>
<dbReference type="Pfam" id="PF00096">
    <property type="entry name" value="zf-C2H2"/>
    <property type="match status" value="9"/>
</dbReference>
<dbReference type="SMART" id="SM00349">
    <property type="entry name" value="KRAB"/>
    <property type="match status" value="1"/>
</dbReference>
<dbReference type="SMART" id="SM00355">
    <property type="entry name" value="ZnF_C2H2"/>
    <property type="match status" value="11"/>
</dbReference>
<dbReference type="SUPFAM" id="SSF57667">
    <property type="entry name" value="beta-beta-alpha zinc fingers"/>
    <property type="match status" value="6"/>
</dbReference>
<dbReference type="SUPFAM" id="SSF109640">
    <property type="entry name" value="KRAB domain (Kruppel-associated box)"/>
    <property type="match status" value="1"/>
</dbReference>
<dbReference type="PROSITE" id="PS50805">
    <property type="entry name" value="KRAB"/>
    <property type="match status" value="1"/>
</dbReference>
<dbReference type="PROSITE" id="PS00028">
    <property type="entry name" value="ZINC_FINGER_C2H2_1"/>
    <property type="match status" value="11"/>
</dbReference>
<dbReference type="PROSITE" id="PS50157">
    <property type="entry name" value="ZINC_FINGER_C2H2_2"/>
    <property type="match status" value="11"/>
</dbReference>
<feature type="chain" id="PRO_0000223953" description="Zinc finger protein 485">
    <location>
        <begin position="1"/>
        <end position="441"/>
    </location>
</feature>
<feature type="domain" description="KRAB" evidence="2">
    <location>
        <begin position="11"/>
        <end position="82"/>
    </location>
</feature>
<feature type="zinc finger region" description="C2H2-type 1" evidence="1">
    <location>
        <begin position="130"/>
        <end position="152"/>
    </location>
</feature>
<feature type="zinc finger region" description="C2H2-type 2" evidence="1">
    <location>
        <begin position="158"/>
        <end position="180"/>
    </location>
</feature>
<feature type="zinc finger region" description="C2H2-type 3" evidence="1">
    <location>
        <begin position="186"/>
        <end position="208"/>
    </location>
</feature>
<feature type="zinc finger region" description="C2H2-type 4" evidence="1">
    <location>
        <begin position="214"/>
        <end position="236"/>
    </location>
</feature>
<feature type="zinc finger region" description="C2H2-type 5" evidence="1">
    <location>
        <begin position="242"/>
        <end position="264"/>
    </location>
</feature>
<feature type="zinc finger region" description="C2H2-type 6" evidence="1">
    <location>
        <begin position="270"/>
        <end position="292"/>
    </location>
</feature>
<feature type="zinc finger region" description="C2H2-type 7" evidence="1">
    <location>
        <begin position="298"/>
        <end position="320"/>
    </location>
</feature>
<feature type="zinc finger region" description="C2H2-type 8" evidence="1">
    <location>
        <begin position="326"/>
        <end position="348"/>
    </location>
</feature>
<feature type="zinc finger region" description="C2H2-type 9" evidence="1">
    <location>
        <begin position="354"/>
        <end position="376"/>
    </location>
</feature>
<feature type="zinc finger region" description="C2H2-type 10" evidence="1">
    <location>
        <begin position="382"/>
        <end position="404"/>
    </location>
</feature>
<feature type="zinc finger region" description="C2H2-type 11" evidence="1">
    <location>
        <begin position="410"/>
        <end position="432"/>
    </location>
</feature>
<feature type="splice variant" id="VSP_055957" description="In isoform 2." evidence="3">
    <location>
        <begin position="1"/>
        <end position="91"/>
    </location>
</feature>
<feature type="sequence variant" id="VAR_059920" description="In dbSNP:rs12354886.">
    <original>A</original>
    <variation>T</variation>
    <location>
        <position position="252"/>
    </location>
</feature>
<name>ZN485_HUMAN</name>
<comment type="function">
    <text>May be involved in transcriptional regulation.</text>
</comment>
<comment type="interaction">
    <interactant intactId="EBI-12901093">
        <id>Q8NCK3</id>
    </interactant>
    <interactant intactId="EBI-727004">
        <id>O00560</id>
        <label>SDCBP</label>
    </interactant>
    <organismsDiffer>false</organismsDiffer>
    <experiments>3</experiments>
</comment>
<comment type="interaction">
    <interactant intactId="EBI-12901093">
        <id>Q8NCK3</id>
    </interactant>
    <interactant intactId="EBI-12224489">
        <id>Q8N8Y5</id>
        <label>ZFP41</label>
    </interactant>
    <organismsDiffer>false</organismsDiffer>
    <experiments>3</experiments>
</comment>
<comment type="subcellular location">
    <subcellularLocation>
        <location evidence="4">Nucleus</location>
    </subcellularLocation>
</comment>
<comment type="alternative products">
    <event type="alternative splicing"/>
    <isoform>
        <id>Q8NCK3-1</id>
        <name>1</name>
        <sequence type="displayed"/>
    </isoform>
    <isoform>
        <id>Q8NCK3-2</id>
        <name>2</name>
        <sequence type="described" ref="VSP_055957"/>
    </isoform>
</comment>
<comment type="similarity">
    <text evidence="4">Belongs to the krueppel C2H2-type zinc-finger protein family.</text>
</comment>
<comment type="sequence caution" evidence="4">
    <conflict type="frameshift">
        <sequence resource="EMBL-CDS" id="AAH14161"/>
    </conflict>
</comment>
<accession>Q8NCK3</accession>
<accession>B4DSE6</accession>
<accession>Q96CL0</accession>